<keyword id="KW-0167">Capsid protein</keyword>
<keyword id="KW-0903">Direct protein sequencing</keyword>
<keyword id="KW-0472">Membrane</keyword>
<keyword id="KW-1185">Reference proteome</keyword>
<keyword id="KW-0812">Transmembrane</keyword>
<keyword id="KW-1133">Transmembrane helix</keyword>
<keyword id="KW-0946">Virion</keyword>
<gene>
    <name type="primary">VP3</name>
</gene>
<organismHost>
    <name type="scientific">Saccharolobus solfataricus</name>
    <name type="common">Sulfolobus solfataricus</name>
    <dbReference type="NCBI Taxonomy" id="2287"/>
</organismHost>
<organism>
    <name type="scientific">Sulfolobus spindle-shape virus 1</name>
    <name type="common">SSV1</name>
    <dbReference type="NCBI Taxonomy" id="244589"/>
    <lineage>
        <taxon>Viruses</taxon>
        <taxon>Viruses incertae sedis</taxon>
        <taxon>Fuselloviridae</taxon>
        <taxon>Alphafusellovirus</taxon>
    </lineage>
</organism>
<evidence type="ECO:0000255" key="1"/>
<evidence type="ECO:0000305" key="2"/>
<comment type="subcellular location">
    <subcellularLocation>
        <location evidence="2">Virion membrane</location>
        <topology evidence="2">Multi-pass membrane protein</topology>
    </subcellularLocation>
</comment>
<comment type="similarity">
    <text evidence="2">Belongs to the fuselloviridae capsid protein VP1/VP3 family.</text>
</comment>
<reference key="1">
    <citation type="journal article" date="1987" name="Mol. Gen. Genet.">
        <title>Identification and characterization of the genes encoding three structural proteins of the Sulfolobus virus-like particle SSV1.</title>
        <authorList>
            <person name="Reiter W.-D."/>
            <person name="Palm P."/>
            <person name="Henschen A."/>
            <person name="Lottspeich F."/>
            <person name="Zillig W."/>
            <person name="Grampp B."/>
        </authorList>
    </citation>
    <scope>NUCLEOTIDE SEQUENCE [GENOMIC DNA]</scope>
    <scope>PROTEIN SEQUENCE OF 1-4</scope>
</reference>
<reference key="2">
    <citation type="journal article" date="1991" name="Virology">
        <title>Complete nucleotide sequence of the virus SSV1 of the archaebacterium Sulfolobus shibatae.</title>
        <authorList>
            <person name="Palm P."/>
            <person name="Schleper C."/>
            <person name="Grampp B."/>
            <person name="Yeats S."/>
            <person name="McWilliam P."/>
            <person name="Reiter W.-D."/>
            <person name="Zillig W."/>
        </authorList>
    </citation>
    <scope>NUCLEOTIDE SEQUENCE [GENOMIC DNA]</scope>
</reference>
<proteinExistence type="evidence at protein level"/>
<protein>
    <recommendedName>
        <fullName>Structural protein VP3</fullName>
    </recommendedName>
</protein>
<dbReference type="EMBL" id="X04829">
    <property type="protein sequence ID" value="CAA28516.1"/>
    <property type="molecule type" value="Genomic_DNA"/>
</dbReference>
<dbReference type="EMBL" id="X07234">
    <property type="protein sequence ID" value="CAA30203.1"/>
    <property type="molecule type" value="Genomic_DNA"/>
</dbReference>
<dbReference type="PIR" id="C40782">
    <property type="entry name" value="VCXDS3"/>
</dbReference>
<dbReference type="SMR" id="P20225"/>
<dbReference type="KEGG" id="vg:2559660"/>
<dbReference type="Proteomes" id="UP000000854">
    <property type="component" value="Genome"/>
</dbReference>
<dbReference type="GO" id="GO:0016020">
    <property type="term" value="C:membrane"/>
    <property type="evidence" value="ECO:0007669"/>
    <property type="project" value="UniProtKB-KW"/>
</dbReference>
<dbReference type="GO" id="GO:0019028">
    <property type="term" value="C:viral capsid"/>
    <property type="evidence" value="ECO:0007669"/>
    <property type="project" value="UniProtKB-KW"/>
</dbReference>
<dbReference type="GO" id="GO:0055036">
    <property type="term" value="C:virion membrane"/>
    <property type="evidence" value="ECO:0007669"/>
    <property type="project" value="UniProtKB-SubCell"/>
</dbReference>
<dbReference type="GO" id="GO:0005198">
    <property type="term" value="F:structural molecule activity"/>
    <property type="evidence" value="ECO:0007669"/>
    <property type="project" value="InterPro"/>
</dbReference>
<dbReference type="InterPro" id="IPR009379">
    <property type="entry name" value="VP1_VP3"/>
</dbReference>
<dbReference type="Pfam" id="PF06281">
    <property type="entry name" value="VP1_VP3"/>
    <property type="match status" value="1"/>
</dbReference>
<feature type="chain" id="PRO_0000223011" description="Structural protein VP3">
    <location>
        <begin position="1"/>
        <end position="92"/>
    </location>
</feature>
<feature type="transmembrane region" description="Helical" evidence="1">
    <location>
        <begin position="8"/>
        <end position="28"/>
    </location>
</feature>
<feature type="transmembrane region" description="Helical" evidence="1">
    <location>
        <begin position="65"/>
        <end position="85"/>
    </location>
</feature>
<accession>P20225</accession>
<sequence length="92" mass="9868">MEISLKPIIFLVVFIIVGIALFGPINSVVNNVTTSGTYTTIVSGTVTTSSFVSNPQYVGSNNATIVALVPLFYILVLIIVPAVVAYKLYKEE</sequence>
<name>VP3_SSV1</name>